<evidence type="ECO:0000256" key="1">
    <source>
        <dbReference type="SAM" id="MobiDB-lite"/>
    </source>
</evidence>
<evidence type="ECO:0000269" key="2">
    <source>
    </source>
</evidence>
<evidence type="ECO:0000305" key="3"/>
<name>NDUS4_NEUCR</name>
<feature type="transit peptide" description="Mitochondrion" evidence="2">
    <location>
        <begin position="1"/>
        <end position="33"/>
    </location>
</feature>
<feature type="chain" id="PRO_0000020036" description="NADH-ubiquinone oxidoreductase 21 kDa subunit, mitochondrial">
    <location>
        <begin position="34"/>
        <end position="218"/>
    </location>
</feature>
<feature type="region of interest" description="Disordered" evidence="1">
    <location>
        <begin position="31"/>
        <end position="74"/>
    </location>
</feature>
<feature type="compositionally biased region" description="Basic and acidic residues" evidence="1">
    <location>
        <begin position="50"/>
        <end position="60"/>
    </location>
</feature>
<proteinExistence type="evidence at protein level"/>
<reference key="1">
    <citation type="journal article" date="1994" name="Biochim. Biophys. Acta">
        <title>Complementary DNA sequences of the 24 kDa and 21 kDa subunits of complex I from Neurospora.</title>
        <authorList>
            <person name="Azevedo J.E."/>
            <person name="Duarte M."/>
            <person name="Belo J.A."/>
            <person name="Werner S."/>
            <person name="Videira A."/>
        </authorList>
    </citation>
    <scope>NUCLEOTIDE SEQUENCE [MRNA] OF 12-218</scope>
</reference>
<reference key="2">
    <citation type="journal article" date="1991" name="Biochim. Biophys. Acta">
        <title>Primary structure of the nuclear-encoded 18.3 kDa subunit of NADH: ubiquinone reductase (complex I) from Neurospora crassa mitochondria.</title>
        <authorList>
            <person name="Weidner U."/>
            <person name="Sackmann U."/>
            <person name="Nehls U."/>
            <person name="Weiss H."/>
        </authorList>
    </citation>
    <scope>NUCLEOTIDE SEQUENCE [MRNA]</scope>
    <scope>PROTEIN SEQUENCE OF 34-59</scope>
    <source>
        <strain>74-ORS-6a / FGSC 4200</strain>
    </source>
</reference>
<reference key="3">
    <citation type="journal article" date="2003" name="Nature">
        <title>The genome sequence of the filamentous fungus Neurospora crassa.</title>
        <authorList>
            <person name="Galagan J.E."/>
            <person name="Calvo S.E."/>
            <person name="Borkovich K.A."/>
            <person name="Selker E.U."/>
            <person name="Read N.D."/>
            <person name="Jaffe D.B."/>
            <person name="FitzHugh W."/>
            <person name="Ma L.-J."/>
            <person name="Smirnov S."/>
            <person name="Purcell S."/>
            <person name="Rehman B."/>
            <person name="Elkins T."/>
            <person name="Engels R."/>
            <person name="Wang S."/>
            <person name="Nielsen C.B."/>
            <person name="Butler J."/>
            <person name="Endrizzi M."/>
            <person name="Qui D."/>
            <person name="Ianakiev P."/>
            <person name="Bell-Pedersen D."/>
            <person name="Nelson M.A."/>
            <person name="Werner-Washburne M."/>
            <person name="Selitrennikoff C.P."/>
            <person name="Kinsey J.A."/>
            <person name="Braun E.L."/>
            <person name="Zelter A."/>
            <person name="Schulte U."/>
            <person name="Kothe G.O."/>
            <person name="Jedd G."/>
            <person name="Mewes H.-W."/>
            <person name="Staben C."/>
            <person name="Marcotte E."/>
            <person name="Greenberg D."/>
            <person name="Roy A."/>
            <person name="Foley K."/>
            <person name="Naylor J."/>
            <person name="Stange-Thomann N."/>
            <person name="Barrett R."/>
            <person name="Gnerre S."/>
            <person name="Kamal M."/>
            <person name="Kamvysselis M."/>
            <person name="Mauceli E.W."/>
            <person name="Bielke C."/>
            <person name="Rudd S."/>
            <person name="Frishman D."/>
            <person name="Krystofova S."/>
            <person name="Rasmussen C."/>
            <person name="Metzenberg R.L."/>
            <person name="Perkins D.D."/>
            <person name="Kroken S."/>
            <person name="Cogoni C."/>
            <person name="Macino G."/>
            <person name="Catcheside D.E.A."/>
            <person name="Li W."/>
            <person name="Pratt R.J."/>
            <person name="Osmani S.A."/>
            <person name="DeSouza C.P.C."/>
            <person name="Glass N.L."/>
            <person name="Orbach M.J."/>
            <person name="Berglund J.A."/>
            <person name="Voelker R."/>
            <person name="Yarden O."/>
            <person name="Plamann M."/>
            <person name="Seiler S."/>
            <person name="Dunlap J.C."/>
            <person name="Radford A."/>
            <person name="Aramayo R."/>
            <person name="Natvig D.O."/>
            <person name="Alex L.A."/>
            <person name="Mannhaupt G."/>
            <person name="Ebbole D.J."/>
            <person name="Freitag M."/>
            <person name="Paulsen I."/>
            <person name="Sachs M.S."/>
            <person name="Lander E.S."/>
            <person name="Nusbaum C."/>
            <person name="Birren B.W."/>
        </authorList>
    </citation>
    <scope>NUCLEOTIDE SEQUENCE [LARGE SCALE GENOMIC DNA]</scope>
    <source>
        <strain>ATCC 24698 / 74-OR23-1A / CBS 708.71 / DSM 1257 / FGSC 987</strain>
    </source>
</reference>
<protein>
    <recommendedName>
        <fullName>NADH-ubiquinone oxidoreductase 21 kDa subunit, mitochondrial</fullName>
    </recommendedName>
    <alternativeName>
        <fullName>Complex I-21kD</fullName>
        <shortName>CI-21kD</shortName>
    </alternativeName>
</protein>
<dbReference type="EMBL" id="X78082">
    <property type="protein sequence ID" value="CAA54989.1"/>
    <property type="molecule type" value="mRNA"/>
</dbReference>
<dbReference type="EMBL" id="X56226">
    <property type="protein sequence ID" value="CAA39675.1"/>
    <property type="status" value="ALT_FRAME"/>
    <property type="molecule type" value="mRNA"/>
</dbReference>
<dbReference type="EMBL" id="CM002239">
    <property type="protein sequence ID" value="EAA32645.1"/>
    <property type="molecule type" value="Genomic_DNA"/>
</dbReference>
<dbReference type="PIR" id="S17192">
    <property type="entry name" value="S17192"/>
</dbReference>
<dbReference type="SMR" id="P25711"/>
<dbReference type="STRING" id="367110.P25711"/>
<dbReference type="TCDB" id="3.D.1.6.2">
    <property type="family name" value="the h+ or na+-translocating nadh dehydrogenase (ndh) family"/>
</dbReference>
<dbReference type="PaxDb" id="5141-EFNCRP00000004969"/>
<dbReference type="EnsemblFungi" id="EAA32645">
    <property type="protein sequence ID" value="EAA32645"/>
    <property type="gene ID" value="NCU05221"/>
</dbReference>
<dbReference type="KEGG" id="ncr:NCU05221"/>
<dbReference type="VEuPathDB" id="FungiDB:NCU05221"/>
<dbReference type="HOGENOM" id="CLU_077196_0_0_1"/>
<dbReference type="InParanoid" id="P25711"/>
<dbReference type="OMA" id="YDATIDH"/>
<dbReference type="OrthoDB" id="3089at2759"/>
<dbReference type="Proteomes" id="UP000001805">
    <property type="component" value="Chromosome 4, Linkage Group IV"/>
</dbReference>
<dbReference type="GO" id="GO:0005743">
    <property type="term" value="C:mitochondrial inner membrane"/>
    <property type="evidence" value="ECO:0007669"/>
    <property type="project" value="UniProtKB-SubCell"/>
</dbReference>
<dbReference type="GO" id="GO:0045271">
    <property type="term" value="C:respiratory chain complex I"/>
    <property type="evidence" value="ECO:0000318"/>
    <property type="project" value="GO_Central"/>
</dbReference>
<dbReference type="GO" id="GO:0022900">
    <property type="term" value="P:electron transport chain"/>
    <property type="evidence" value="ECO:0007669"/>
    <property type="project" value="InterPro"/>
</dbReference>
<dbReference type="FunFam" id="3.30.160.190:FF:000001">
    <property type="entry name" value="NADH-ubiquinone oxidoreductase 21 kDa subunit mitochondrial"/>
    <property type="match status" value="1"/>
</dbReference>
<dbReference type="Gene3D" id="3.30.160.190">
    <property type="entry name" value="atu1810 like domain"/>
    <property type="match status" value="1"/>
</dbReference>
<dbReference type="InterPro" id="IPR006885">
    <property type="entry name" value="NADH_UbQ_FeS_4_mit-like"/>
</dbReference>
<dbReference type="InterPro" id="IPR038532">
    <property type="entry name" value="NDUFS4-like_sf"/>
</dbReference>
<dbReference type="PANTHER" id="PTHR12219:SF8">
    <property type="entry name" value="NADH DEHYDROGENASE [UBIQUINONE] IRON-SULFUR PROTEIN 4, MITOCHONDRIAL"/>
    <property type="match status" value="1"/>
</dbReference>
<dbReference type="PANTHER" id="PTHR12219">
    <property type="entry name" value="NADH-UBIQUINONE OXIDOREDUCTASE"/>
    <property type="match status" value="1"/>
</dbReference>
<dbReference type="Pfam" id="PF04800">
    <property type="entry name" value="NDUS4"/>
    <property type="match status" value="1"/>
</dbReference>
<accession>P25711</accession>
<accession>P40916</accession>
<accession>Q7RVF0</accession>
<keyword id="KW-0903">Direct protein sequencing</keyword>
<keyword id="KW-0249">Electron transport</keyword>
<keyword id="KW-0472">Membrane</keyword>
<keyword id="KW-0496">Mitochondrion</keyword>
<keyword id="KW-0999">Mitochondrion inner membrane</keyword>
<keyword id="KW-1185">Reference proteome</keyword>
<keyword id="KW-0679">Respiratory chain</keyword>
<keyword id="KW-0809">Transit peptide</keyword>
<keyword id="KW-0813">Transport</keyword>
<sequence length="218" mass="24474">MSALRITTASAARMLRTSNAMMPSVMGAAQRRALSDSAEPARVPSVESARVPEKLAKEDSPLATPKRNSPDYNVPIDKATSTWTPVPKHIQNGSEEGILPAAVVSGAPMELQARTVRIYLPSKPATQSSNSRVLWRMDWDVLEKGHRWENELMGWQSSGDFVQGTHLTFRTKEEAIQFAEKQGYEYFVQEPNQRHFTPKAYANNFLYSPKKLKIVRTK</sequence>
<gene>
    <name type="primary">nuo-21</name>
    <name type="synonym">nuo-18</name>
    <name type="ORF">NCU05221</name>
</gene>
<organism>
    <name type="scientific">Neurospora crassa (strain ATCC 24698 / 74-OR23-1A / CBS 708.71 / DSM 1257 / FGSC 987)</name>
    <dbReference type="NCBI Taxonomy" id="367110"/>
    <lineage>
        <taxon>Eukaryota</taxon>
        <taxon>Fungi</taxon>
        <taxon>Dikarya</taxon>
        <taxon>Ascomycota</taxon>
        <taxon>Pezizomycotina</taxon>
        <taxon>Sordariomycetes</taxon>
        <taxon>Sordariomycetidae</taxon>
        <taxon>Sordariales</taxon>
        <taxon>Sordariaceae</taxon>
        <taxon>Neurospora</taxon>
    </lineage>
</organism>
<comment type="function">
    <text>Accessory subunit of the mitochondrial membrane respiratory chain NADH dehydrogenase (Complex I), that is believed not to be involved in catalysis. Complex I functions in the transfer of electrons from NADH to the respiratory chain. The immediate electron acceptor for the enzyme is believed to be ubiquinone.</text>
</comment>
<comment type="subunit">
    <text>Complex I is composed of about 40 different subunits. This is a component of the iron-sulfur (IP) fragment of the enzyme.</text>
</comment>
<comment type="subcellular location">
    <subcellularLocation>
        <location>Mitochondrion inner membrane</location>
    </subcellularLocation>
</comment>
<comment type="similarity">
    <text evidence="3">Belongs to the complex I NDUFS4 subunit family.</text>
</comment>
<comment type="caution">
    <text evidence="3">It is uncertain whether Met-1 or Met-14 is the initiator.</text>
</comment>
<comment type="sequence caution" evidence="3">
    <conflict type="frameshift">
        <sequence resource="EMBL-CDS" id="CAA39675"/>
    </conflict>
</comment>